<feature type="chain" id="PRO_1000078904" description="Small ribosomal subunit protein uS2">
    <location>
        <begin position="1"/>
        <end position="255"/>
    </location>
</feature>
<feature type="region of interest" description="Disordered" evidence="2">
    <location>
        <begin position="226"/>
        <end position="255"/>
    </location>
</feature>
<accession>A5ISE0</accession>
<reference key="1">
    <citation type="submission" date="2007-05" db="EMBL/GenBank/DDBJ databases">
        <title>Complete sequence of chromosome of Staphylococcus aureus subsp. aureus JH9.</title>
        <authorList>
            <consortium name="US DOE Joint Genome Institute"/>
            <person name="Copeland A."/>
            <person name="Lucas S."/>
            <person name="Lapidus A."/>
            <person name="Barry K."/>
            <person name="Detter J.C."/>
            <person name="Glavina del Rio T."/>
            <person name="Hammon N."/>
            <person name="Israni S."/>
            <person name="Pitluck S."/>
            <person name="Chain P."/>
            <person name="Malfatti S."/>
            <person name="Shin M."/>
            <person name="Vergez L."/>
            <person name="Schmutz J."/>
            <person name="Larimer F."/>
            <person name="Land M."/>
            <person name="Hauser L."/>
            <person name="Kyrpides N."/>
            <person name="Kim E."/>
            <person name="Tomasz A."/>
            <person name="Richardson P."/>
        </authorList>
    </citation>
    <scope>NUCLEOTIDE SEQUENCE [LARGE SCALE GENOMIC DNA]</scope>
    <source>
        <strain>JH9</strain>
    </source>
</reference>
<comment type="similarity">
    <text evidence="1">Belongs to the universal ribosomal protein uS2 family.</text>
</comment>
<protein>
    <recommendedName>
        <fullName evidence="1">Small ribosomal subunit protein uS2</fullName>
    </recommendedName>
    <alternativeName>
        <fullName evidence="3">30S ribosomal protein S2</fullName>
    </alternativeName>
</protein>
<sequence>MAVISMKQLLEAGVHFGHQTRRWNPKMKKYIFTERNGIYIIDLQKTVRKVDEAYNFLKQVSEDGGQVLFVGTKKQAQESVKSEAERAGQFYINQRWLGGLLTNYKTISKRIKRISEIEKMEEDGLFEVLPKKEVVELKKEYDRLIKFLGGIRDMKSMPQALFVVDPRKERNAIAEARKLNIPIVGIVDTNCDPDEIDYVIPANDDAIRAVKLLTAKMADAILEGQQGVSNEEVAAEQNIDLDEKEKSEETEATEE</sequence>
<name>RS2_STAA9</name>
<keyword id="KW-0687">Ribonucleoprotein</keyword>
<keyword id="KW-0689">Ribosomal protein</keyword>
<dbReference type="EMBL" id="CP000703">
    <property type="protein sequence ID" value="ABQ49113.1"/>
    <property type="molecule type" value="Genomic_DNA"/>
</dbReference>
<dbReference type="RefSeq" id="WP_000268486.1">
    <property type="nucleotide sequence ID" value="NC_009487.1"/>
</dbReference>
<dbReference type="SMR" id="A5ISE0"/>
<dbReference type="KEGG" id="saj:SaurJH9_1316"/>
<dbReference type="HOGENOM" id="CLU_040318_1_2_9"/>
<dbReference type="GO" id="GO:0022627">
    <property type="term" value="C:cytosolic small ribosomal subunit"/>
    <property type="evidence" value="ECO:0007669"/>
    <property type="project" value="TreeGrafter"/>
</dbReference>
<dbReference type="GO" id="GO:0003735">
    <property type="term" value="F:structural constituent of ribosome"/>
    <property type="evidence" value="ECO:0007669"/>
    <property type="project" value="InterPro"/>
</dbReference>
<dbReference type="GO" id="GO:0006412">
    <property type="term" value="P:translation"/>
    <property type="evidence" value="ECO:0007669"/>
    <property type="project" value="UniProtKB-UniRule"/>
</dbReference>
<dbReference type="CDD" id="cd01425">
    <property type="entry name" value="RPS2"/>
    <property type="match status" value="1"/>
</dbReference>
<dbReference type="FunFam" id="1.10.287.610:FF:000001">
    <property type="entry name" value="30S ribosomal protein S2"/>
    <property type="match status" value="1"/>
</dbReference>
<dbReference type="Gene3D" id="3.40.50.10490">
    <property type="entry name" value="Glucose-6-phosphate isomerase like protein, domain 1"/>
    <property type="match status" value="1"/>
</dbReference>
<dbReference type="Gene3D" id="1.10.287.610">
    <property type="entry name" value="Helix hairpin bin"/>
    <property type="match status" value="1"/>
</dbReference>
<dbReference type="HAMAP" id="MF_00291_B">
    <property type="entry name" value="Ribosomal_uS2_B"/>
    <property type="match status" value="1"/>
</dbReference>
<dbReference type="InterPro" id="IPR001865">
    <property type="entry name" value="Ribosomal_uS2"/>
</dbReference>
<dbReference type="InterPro" id="IPR005706">
    <property type="entry name" value="Ribosomal_uS2_bac/mit/plastid"/>
</dbReference>
<dbReference type="InterPro" id="IPR018130">
    <property type="entry name" value="Ribosomal_uS2_CS"/>
</dbReference>
<dbReference type="InterPro" id="IPR023591">
    <property type="entry name" value="Ribosomal_uS2_flav_dom_sf"/>
</dbReference>
<dbReference type="NCBIfam" id="TIGR01011">
    <property type="entry name" value="rpsB_bact"/>
    <property type="match status" value="1"/>
</dbReference>
<dbReference type="PANTHER" id="PTHR12534">
    <property type="entry name" value="30S RIBOSOMAL PROTEIN S2 PROKARYOTIC AND ORGANELLAR"/>
    <property type="match status" value="1"/>
</dbReference>
<dbReference type="PANTHER" id="PTHR12534:SF0">
    <property type="entry name" value="SMALL RIBOSOMAL SUBUNIT PROTEIN US2M"/>
    <property type="match status" value="1"/>
</dbReference>
<dbReference type="Pfam" id="PF00318">
    <property type="entry name" value="Ribosomal_S2"/>
    <property type="match status" value="1"/>
</dbReference>
<dbReference type="PRINTS" id="PR00395">
    <property type="entry name" value="RIBOSOMALS2"/>
</dbReference>
<dbReference type="SUPFAM" id="SSF52313">
    <property type="entry name" value="Ribosomal protein S2"/>
    <property type="match status" value="1"/>
</dbReference>
<dbReference type="PROSITE" id="PS00962">
    <property type="entry name" value="RIBOSOMAL_S2_1"/>
    <property type="match status" value="1"/>
</dbReference>
<dbReference type="PROSITE" id="PS00963">
    <property type="entry name" value="RIBOSOMAL_S2_2"/>
    <property type="match status" value="1"/>
</dbReference>
<evidence type="ECO:0000255" key="1">
    <source>
        <dbReference type="HAMAP-Rule" id="MF_00291"/>
    </source>
</evidence>
<evidence type="ECO:0000256" key="2">
    <source>
        <dbReference type="SAM" id="MobiDB-lite"/>
    </source>
</evidence>
<evidence type="ECO:0000305" key="3"/>
<organism>
    <name type="scientific">Staphylococcus aureus (strain JH9)</name>
    <dbReference type="NCBI Taxonomy" id="359786"/>
    <lineage>
        <taxon>Bacteria</taxon>
        <taxon>Bacillati</taxon>
        <taxon>Bacillota</taxon>
        <taxon>Bacilli</taxon>
        <taxon>Bacillales</taxon>
        <taxon>Staphylococcaceae</taxon>
        <taxon>Staphylococcus</taxon>
    </lineage>
</organism>
<gene>
    <name evidence="1" type="primary">rpsB</name>
    <name type="ordered locus">SaurJH9_1316</name>
</gene>
<proteinExistence type="inferred from homology"/>